<keyword id="KW-0150">Chloroplast</keyword>
<keyword id="KW-0249">Electron transport</keyword>
<keyword id="KW-0349">Heme</keyword>
<keyword id="KW-0408">Iron</keyword>
<keyword id="KW-0472">Membrane</keyword>
<keyword id="KW-0479">Metal-binding</keyword>
<keyword id="KW-0602">Photosynthesis</keyword>
<keyword id="KW-0934">Plastid</keyword>
<keyword id="KW-1185">Reference proteome</keyword>
<keyword id="KW-0732">Signal</keyword>
<keyword id="KW-0793">Thylakoid</keyword>
<keyword id="KW-0812">Transmembrane</keyword>
<keyword id="KW-1133">Transmembrane helix</keyword>
<keyword id="KW-0813">Transport</keyword>
<feature type="signal peptide" evidence="2">
    <location>
        <begin position="1"/>
        <end position="24"/>
    </location>
</feature>
<feature type="chain" id="PRO_0000275435" description="Cytochrome f">
    <location>
        <begin position="25"/>
        <end position="307"/>
    </location>
</feature>
<feature type="transmembrane region" description="Helical" evidence="2">
    <location>
        <begin position="273"/>
        <end position="293"/>
    </location>
</feature>
<feature type="binding site" description="axial binding residue" evidence="2">
    <location>
        <position position="25"/>
    </location>
    <ligand>
        <name>heme</name>
        <dbReference type="ChEBI" id="CHEBI:30413"/>
    </ligand>
    <ligandPart>
        <name>Fe</name>
        <dbReference type="ChEBI" id="CHEBI:18248"/>
    </ligandPart>
</feature>
<feature type="binding site" description="covalent" evidence="2">
    <location>
        <position position="45"/>
    </location>
    <ligand>
        <name>heme</name>
        <dbReference type="ChEBI" id="CHEBI:30413"/>
    </ligand>
</feature>
<feature type="binding site" description="covalent" evidence="2">
    <location>
        <position position="48"/>
    </location>
    <ligand>
        <name>heme</name>
        <dbReference type="ChEBI" id="CHEBI:30413"/>
    </ligand>
</feature>
<feature type="binding site" description="axial binding residue" evidence="2">
    <location>
        <position position="49"/>
    </location>
    <ligand>
        <name>heme</name>
        <dbReference type="ChEBI" id="CHEBI:30413"/>
    </ligand>
    <ligandPart>
        <name>Fe</name>
        <dbReference type="ChEBI" id="CHEBI:18248"/>
    </ligandPart>
</feature>
<evidence type="ECO:0000250" key="1"/>
<evidence type="ECO:0000255" key="2">
    <source>
        <dbReference type="HAMAP-Rule" id="MF_00610"/>
    </source>
</evidence>
<reference key="1">
    <citation type="journal article" date="2007" name="Mol. Biol. Evol.">
        <title>The complete chloroplast and mitochondrial DNA sequence of Ostreococcus tauri: organelle genomes of the smallest eukaryote are examples of compaction.</title>
        <authorList>
            <person name="Robbens S."/>
            <person name="Derelle E."/>
            <person name="Ferraz C."/>
            <person name="Wuyts J."/>
            <person name="Moreau H."/>
            <person name="Van de Peer Y."/>
        </authorList>
    </citation>
    <scope>NUCLEOTIDE SEQUENCE [LARGE SCALE GENOMIC DNA]</scope>
    <source>
        <strain>OTTH0595</strain>
    </source>
</reference>
<protein>
    <recommendedName>
        <fullName evidence="2">Cytochrome f</fullName>
    </recommendedName>
</protein>
<dbReference type="EMBL" id="CR954199">
    <property type="protein sequence ID" value="CAL36374.1"/>
    <property type="molecule type" value="Genomic_DNA"/>
</dbReference>
<dbReference type="RefSeq" id="YP_717252.1">
    <property type="nucleotide sequence ID" value="NC_008289.1"/>
</dbReference>
<dbReference type="SMR" id="Q0P3K3"/>
<dbReference type="FunCoup" id="Q0P3K3">
    <property type="interactions" value="189"/>
</dbReference>
<dbReference type="STRING" id="70448.Q0P3K3"/>
<dbReference type="GeneID" id="4238837"/>
<dbReference type="KEGG" id="ota:OstapCp49"/>
<dbReference type="eggNOG" id="ENOG502QPT8">
    <property type="taxonomic scope" value="Eukaryota"/>
</dbReference>
<dbReference type="InParanoid" id="Q0P3K3"/>
<dbReference type="Proteomes" id="UP000009170">
    <property type="component" value="Chloroplast"/>
</dbReference>
<dbReference type="GO" id="GO:0009535">
    <property type="term" value="C:chloroplast thylakoid membrane"/>
    <property type="evidence" value="ECO:0007669"/>
    <property type="project" value="UniProtKB-SubCell"/>
</dbReference>
<dbReference type="GO" id="GO:0009055">
    <property type="term" value="F:electron transfer activity"/>
    <property type="evidence" value="ECO:0007669"/>
    <property type="project" value="UniProtKB-UniRule"/>
</dbReference>
<dbReference type="GO" id="GO:0020037">
    <property type="term" value="F:heme binding"/>
    <property type="evidence" value="ECO:0007669"/>
    <property type="project" value="InterPro"/>
</dbReference>
<dbReference type="GO" id="GO:0005506">
    <property type="term" value="F:iron ion binding"/>
    <property type="evidence" value="ECO:0007669"/>
    <property type="project" value="InterPro"/>
</dbReference>
<dbReference type="GO" id="GO:0015979">
    <property type="term" value="P:photosynthesis"/>
    <property type="evidence" value="ECO:0007669"/>
    <property type="project" value="UniProtKB-UniRule"/>
</dbReference>
<dbReference type="FunFam" id="1.20.5.700:FF:000001">
    <property type="entry name" value="Cytochrome f"/>
    <property type="match status" value="1"/>
</dbReference>
<dbReference type="FunFam" id="2.60.40.830:FF:000001">
    <property type="entry name" value="Cytochrome f"/>
    <property type="match status" value="1"/>
</dbReference>
<dbReference type="Gene3D" id="2.40.50.100">
    <property type="match status" value="1"/>
</dbReference>
<dbReference type="Gene3D" id="2.60.40.830">
    <property type="entry name" value="Cytochrome f large domain"/>
    <property type="match status" value="1"/>
</dbReference>
<dbReference type="Gene3D" id="1.20.5.700">
    <property type="entry name" value="Single helix bin"/>
    <property type="match status" value="1"/>
</dbReference>
<dbReference type="HAMAP" id="MF_00610">
    <property type="entry name" value="Cytb6_f_cytF"/>
    <property type="match status" value="1"/>
</dbReference>
<dbReference type="InterPro" id="IPR024058">
    <property type="entry name" value="Cyt-f_TM"/>
</dbReference>
<dbReference type="InterPro" id="IPR002325">
    <property type="entry name" value="Cyt_f"/>
</dbReference>
<dbReference type="InterPro" id="IPR024094">
    <property type="entry name" value="Cyt_f_lg_dom"/>
</dbReference>
<dbReference type="InterPro" id="IPR036826">
    <property type="entry name" value="Cyt_f_lg_dom_sf"/>
</dbReference>
<dbReference type="InterPro" id="IPR011054">
    <property type="entry name" value="Rudment_hybrid_motif"/>
</dbReference>
<dbReference type="PANTHER" id="PTHR33288">
    <property type="match status" value="1"/>
</dbReference>
<dbReference type="PANTHER" id="PTHR33288:SF10">
    <property type="entry name" value="CYTOCHROME F"/>
    <property type="match status" value="1"/>
</dbReference>
<dbReference type="Pfam" id="PF01333">
    <property type="entry name" value="Apocytochr_F_C"/>
    <property type="match status" value="1"/>
</dbReference>
<dbReference type="Pfam" id="PF16639">
    <property type="entry name" value="Apocytochr_F_N"/>
    <property type="match status" value="1"/>
</dbReference>
<dbReference type="PRINTS" id="PR00610">
    <property type="entry name" value="CYTOCHROMEF"/>
</dbReference>
<dbReference type="SUPFAM" id="SSF103431">
    <property type="entry name" value="Cytochrome f subunit of the cytochrome b6f complex, transmembrane anchor"/>
    <property type="match status" value="1"/>
</dbReference>
<dbReference type="SUPFAM" id="SSF49441">
    <property type="entry name" value="Cytochrome f, large domain"/>
    <property type="match status" value="1"/>
</dbReference>
<dbReference type="SUPFAM" id="SSF51246">
    <property type="entry name" value="Rudiment single hybrid motif"/>
    <property type="match status" value="1"/>
</dbReference>
<dbReference type="PROSITE" id="PS51010">
    <property type="entry name" value="CYTF"/>
    <property type="match status" value="1"/>
</dbReference>
<geneLocation type="chloroplast"/>
<organism>
    <name type="scientific">Ostreococcus tauri</name>
    <dbReference type="NCBI Taxonomy" id="70448"/>
    <lineage>
        <taxon>Eukaryota</taxon>
        <taxon>Viridiplantae</taxon>
        <taxon>Chlorophyta</taxon>
        <taxon>Mamiellophyceae</taxon>
        <taxon>Mamiellales</taxon>
        <taxon>Bathycoccaceae</taxon>
        <taxon>Ostreococcus</taxon>
    </lineage>
</organism>
<sequence>MKKNLFLVSVFASLFVGTANNALAYPMYAQQGYENPREATGRIVCANCHLAQKPVDIEVPQAVLPDSVFEAVVKIPYNQEVKQVLGNGKKGGLNVGAVLILPDGFTMAPADRMSAELKEKVGKLYFQPYSEDKQNILIVGPVPGKKYSEMTFPLLSPDPATNKKVNYLTYPIYLGGNRGRGQVYPDGSKSNNTVYNAAAAGKIAAINPTEKGTDVVIDKVDGGSVTVAIPSGPDLLVSVGDTVAADQPITNNPNVGGFGQGETEIVLQNPARLQGLVIFLGFVLIAQVFLVLKKKQFEKVQLSEMNF</sequence>
<gene>
    <name evidence="2" type="primary">petA</name>
    <name type="ordered locus">OtCpg00490</name>
</gene>
<accession>Q0P3K3</accession>
<name>CYF_OSTTA</name>
<proteinExistence type="inferred from homology"/>
<comment type="function">
    <text evidence="2">Component of the cytochrome b6-f complex, which mediates electron transfer between photosystem II (PSII) and photosystem I (PSI), cyclic electron flow around PSI, and state transitions.</text>
</comment>
<comment type="cofactor">
    <cofactor evidence="2">
        <name>heme</name>
        <dbReference type="ChEBI" id="CHEBI:30413"/>
    </cofactor>
    <text evidence="2">Binds 1 heme group covalently.</text>
</comment>
<comment type="subunit">
    <text evidence="1">The 4 large subunits of the cytochrome b6-f complex are cytochrome b6, subunit IV (17 kDa polypeptide, petD), cytochrome f and the Rieske protein, while the 4 small subunits are PetG, PetL, PetM and PetN. The complex functions as a dimer (By similarity).</text>
</comment>
<comment type="subcellular location">
    <subcellularLocation>
        <location evidence="2">Plastid</location>
        <location evidence="2">Chloroplast thylakoid membrane</location>
        <topology evidence="2">Single-pass membrane protein</topology>
    </subcellularLocation>
</comment>
<comment type="similarity">
    <text evidence="2">Belongs to the cytochrome f family.</text>
</comment>